<evidence type="ECO:0000255" key="1">
    <source>
        <dbReference type="HAMAP-Rule" id="MF_00435"/>
    </source>
</evidence>
<evidence type="ECO:0000255" key="2">
    <source>
        <dbReference type="PROSITE-ProRule" id="PRU01197"/>
    </source>
</evidence>
<evidence type="ECO:0000255" key="3">
    <source>
        <dbReference type="PROSITE-ProRule" id="PRU01198"/>
    </source>
</evidence>
<sequence length="491" mass="54009">MANYFNTLNLRQQLAQLGKCRFMGRDEFADGASYLQGKKVVIVGCGAQGLNQGLNMRDSGLDISYALRKEAIAEKRASWRKATENGFKVGTYEELIPQADLVVNLTPDKQHSDVVRSVQPLMKDGAALGYSHGFNIVEVGEQIRKDITVVMVAPKCPGTEVREEYKRGFGVPTLIAVHPENDPKGEGMAIAKAWAAATGGHRAGVLESSFVAEVKSDLMGEQTILCGMLQAGSLLCFDKLVAEGTDPAYAEKLIQFGWETITEALKQGGITLMMDRLSNPAKLRAYALSEQLKEIMAPLFQKHMDDIISGEFSSGMMADWANDDKKLLTWREETGKTAFETAPQYEGKIGEQEYFDKGVLMIAMVKAGVELAFETMVDSGIIEESAYYESLHELPLIANTIARKRLYEMNVVISDTAEYGNYLFSYACVPLLKEFMTTLQTGDLGKAIAEGAVDNAQLRDVNEAIRSHAIEQVGKKLRGYMTDMKRIAVAG</sequence>
<dbReference type="EC" id="1.1.1.86" evidence="1"/>
<dbReference type="EMBL" id="CP000964">
    <property type="protein sequence ID" value="ACI06555.1"/>
    <property type="molecule type" value="Genomic_DNA"/>
</dbReference>
<dbReference type="SMR" id="B5XYZ8"/>
<dbReference type="KEGG" id="kpe:KPK_5407"/>
<dbReference type="HOGENOM" id="CLU_551905_0_0_6"/>
<dbReference type="UniPathway" id="UPA00047">
    <property type="reaction ID" value="UER00056"/>
</dbReference>
<dbReference type="UniPathway" id="UPA00049">
    <property type="reaction ID" value="UER00060"/>
</dbReference>
<dbReference type="Proteomes" id="UP000001734">
    <property type="component" value="Chromosome"/>
</dbReference>
<dbReference type="GO" id="GO:0005829">
    <property type="term" value="C:cytosol"/>
    <property type="evidence" value="ECO:0007669"/>
    <property type="project" value="TreeGrafter"/>
</dbReference>
<dbReference type="GO" id="GO:0004455">
    <property type="term" value="F:ketol-acid reductoisomerase activity"/>
    <property type="evidence" value="ECO:0007669"/>
    <property type="project" value="UniProtKB-UniRule"/>
</dbReference>
<dbReference type="GO" id="GO:0000287">
    <property type="term" value="F:magnesium ion binding"/>
    <property type="evidence" value="ECO:0007669"/>
    <property type="project" value="UniProtKB-UniRule"/>
</dbReference>
<dbReference type="GO" id="GO:0009097">
    <property type="term" value="P:isoleucine biosynthetic process"/>
    <property type="evidence" value="ECO:0007669"/>
    <property type="project" value="UniProtKB-UniRule"/>
</dbReference>
<dbReference type="GO" id="GO:0009099">
    <property type="term" value="P:L-valine biosynthetic process"/>
    <property type="evidence" value="ECO:0007669"/>
    <property type="project" value="UniProtKB-UniRule"/>
</dbReference>
<dbReference type="FunFam" id="1.10.1040.10:FF:000007">
    <property type="entry name" value="Ketol-acid reductoisomerase (NADP(+))"/>
    <property type="match status" value="1"/>
</dbReference>
<dbReference type="FunFam" id="3.40.50.720:FF:000043">
    <property type="entry name" value="Ketol-acid reductoisomerase (NADP(+))"/>
    <property type="match status" value="1"/>
</dbReference>
<dbReference type="Gene3D" id="1.10.1040.10">
    <property type="entry name" value="N-(1-d-carboxylethyl)-l-norvaline Dehydrogenase, domain 2"/>
    <property type="match status" value="1"/>
</dbReference>
<dbReference type="Gene3D" id="3.40.50.720">
    <property type="entry name" value="NAD(P)-binding Rossmann-like Domain"/>
    <property type="match status" value="1"/>
</dbReference>
<dbReference type="HAMAP" id="MF_00435">
    <property type="entry name" value="IlvC"/>
    <property type="match status" value="1"/>
</dbReference>
<dbReference type="InterPro" id="IPR008927">
    <property type="entry name" value="6-PGluconate_DH-like_C_sf"/>
</dbReference>
<dbReference type="InterPro" id="IPR013328">
    <property type="entry name" value="6PGD_dom2"/>
</dbReference>
<dbReference type="InterPro" id="IPR013023">
    <property type="entry name" value="KARI"/>
</dbReference>
<dbReference type="InterPro" id="IPR000506">
    <property type="entry name" value="KARI_C"/>
</dbReference>
<dbReference type="InterPro" id="IPR013116">
    <property type="entry name" value="KARI_N"/>
</dbReference>
<dbReference type="InterPro" id="IPR036291">
    <property type="entry name" value="NAD(P)-bd_dom_sf"/>
</dbReference>
<dbReference type="NCBIfam" id="TIGR00465">
    <property type="entry name" value="ilvC"/>
    <property type="match status" value="1"/>
</dbReference>
<dbReference type="NCBIfam" id="NF003557">
    <property type="entry name" value="PRK05225.1"/>
    <property type="match status" value="1"/>
</dbReference>
<dbReference type="PANTHER" id="PTHR21371">
    <property type="entry name" value="KETOL-ACID REDUCTOISOMERASE, MITOCHONDRIAL"/>
    <property type="match status" value="1"/>
</dbReference>
<dbReference type="PANTHER" id="PTHR21371:SF1">
    <property type="entry name" value="KETOL-ACID REDUCTOISOMERASE, MITOCHONDRIAL"/>
    <property type="match status" value="1"/>
</dbReference>
<dbReference type="Pfam" id="PF01450">
    <property type="entry name" value="KARI_C"/>
    <property type="match status" value="2"/>
</dbReference>
<dbReference type="Pfam" id="PF07991">
    <property type="entry name" value="KARI_N"/>
    <property type="match status" value="1"/>
</dbReference>
<dbReference type="SUPFAM" id="SSF48179">
    <property type="entry name" value="6-phosphogluconate dehydrogenase C-terminal domain-like"/>
    <property type="match status" value="2"/>
</dbReference>
<dbReference type="SUPFAM" id="SSF51735">
    <property type="entry name" value="NAD(P)-binding Rossmann-fold domains"/>
    <property type="match status" value="1"/>
</dbReference>
<dbReference type="PROSITE" id="PS51851">
    <property type="entry name" value="KARI_C"/>
    <property type="match status" value="2"/>
</dbReference>
<dbReference type="PROSITE" id="PS51850">
    <property type="entry name" value="KARI_N"/>
    <property type="match status" value="1"/>
</dbReference>
<feature type="chain" id="PRO_1000124300" description="Ketol-acid reductoisomerase (NADP(+))">
    <location>
        <begin position="1"/>
        <end position="491"/>
    </location>
</feature>
<feature type="domain" description="KARI N-terminal Rossmann" evidence="2">
    <location>
        <begin position="15"/>
        <end position="208"/>
    </location>
</feature>
<feature type="domain" description="KARI C-terminal knotted 1" evidence="3">
    <location>
        <begin position="209"/>
        <end position="344"/>
    </location>
</feature>
<feature type="domain" description="KARI C-terminal knotted 2" evidence="3">
    <location>
        <begin position="345"/>
        <end position="484"/>
    </location>
</feature>
<feature type="active site" evidence="1">
    <location>
        <position position="132"/>
    </location>
</feature>
<feature type="binding site" evidence="1">
    <location>
        <begin position="45"/>
        <end position="48"/>
    </location>
    <ligand>
        <name>NADP(+)</name>
        <dbReference type="ChEBI" id="CHEBI:58349"/>
    </ligand>
</feature>
<feature type="binding site" evidence="1">
    <location>
        <position position="68"/>
    </location>
    <ligand>
        <name>NADP(+)</name>
        <dbReference type="ChEBI" id="CHEBI:58349"/>
    </ligand>
</feature>
<feature type="binding site" evidence="1">
    <location>
        <position position="76"/>
    </location>
    <ligand>
        <name>NADP(+)</name>
        <dbReference type="ChEBI" id="CHEBI:58349"/>
    </ligand>
</feature>
<feature type="binding site" evidence="1">
    <location>
        <position position="78"/>
    </location>
    <ligand>
        <name>NADP(+)</name>
        <dbReference type="ChEBI" id="CHEBI:58349"/>
    </ligand>
</feature>
<feature type="binding site" evidence="1">
    <location>
        <begin position="108"/>
        <end position="110"/>
    </location>
    <ligand>
        <name>NADP(+)</name>
        <dbReference type="ChEBI" id="CHEBI:58349"/>
    </ligand>
</feature>
<feature type="binding site" evidence="1">
    <location>
        <position position="158"/>
    </location>
    <ligand>
        <name>NADP(+)</name>
        <dbReference type="ChEBI" id="CHEBI:58349"/>
    </ligand>
</feature>
<feature type="binding site" evidence="1">
    <location>
        <position position="217"/>
    </location>
    <ligand>
        <name>Mg(2+)</name>
        <dbReference type="ChEBI" id="CHEBI:18420"/>
        <label>1</label>
    </ligand>
</feature>
<feature type="binding site" evidence="1">
    <location>
        <position position="217"/>
    </location>
    <ligand>
        <name>Mg(2+)</name>
        <dbReference type="ChEBI" id="CHEBI:18420"/>
        <label>2</label>
    </ligand>
</feature>
<feature type="binding site" evidence="1">
    <location>
        <position position="221"/>
    </location>
    <ligand>
        <name>Mg(2+)</name>
        <dbReference type="ChEBI" id="CHEBI:18420"/>
        <label>1</label>
    </ligand>
</feature>
<feature type="binding site" evidence="1">
    <location>
        <position position="389"/>
    </location>
    <ligand>
        <name>Mg(2+)</name>
        <dbReference type="ChEBI" id="CHEBI:18420"/>
        <label>2</label>
    </ligand>
</feature>
<feature type="binding site" evidence="1">
    <location>
        <position position="393"/>
    </location>
    <ligand>
        <name>Mg(2+)</name>
        <dbReference type="ChEBI" id="CHEBI:18420"/>
        <label>2</label>
    </ligand>
</feature>
<feature type="binding site" evidence="1">
    <location>
        <position position="414"/>
    </location>
    <ligand>
        <name>substrate</name>
    </ligand>
</feature>
<accession>B5XYZ8</accession>
<comment type="function">
    <text evidence="1">Involved in the biosynthesis of branched-chain amino acids (BCAA). Catalyzes an alkyl-migration followed by a ketol-acid reduction of (S)-2-acetolactate (S2AL) to yield (R)-2,3-dihydroxy-isovalerate. In the isomerase reaction, S2AL is rearranged via a Mg-dependent methyl migration to produce 3-hydroxy-3-methyl-2-ketobutyrate (HMKB). In the reductase reaction, this 2-ketoacid undergoes a metal-dependent reduction by NADPH to yield (R)-2,3-dihydroxy-isovalerate.</text>
</comment>
<comment type="catalytic activity">
    <reaction evidence="1">
        <text>(2R)-2,3-dihydroxy-3-methylbutanoate + NADP(+) = (2S)-2-acetolactate + NADPH + H(+)</text>
        <dbReference type="Rhea" id="RHEA:22068"/>
        <dbReference type="ChEBI" id="CHEBI:15378"/>
        <dbReference type="ChEBI" id="CHEBI:49072"/>
        <dbReference type="ChEBI" id="CHEBI:57783"/>
        <dbReference type="ChEBI" id="CHEBI:58349"/>
        <dbReference type="ChEBI" id="CHEBI:58476"/>
        <dbReference type="EC" id="1.1.1.86"/>
    </reaction>
</comment>
<comment type="catalytic activity">
    <reaction evidence="1">
        <text>(2R,3R)-2,3-dihydroxy-3-methylpentanoate + NADP(+) = (S)-2-ethyl-2-hydroxy-3-oxobutanoate + NADPH + H(+)</text>
        <dbReference type="Rhea" id="RHEA:13493"/>
        <dbReference type="ChEBI" id="CHEBI:15378"/>
        <dbReference type="ChEBI" id="CHEBI:49256"/>
        <dbReference type="ChEBI" id="CHEBI:49258"/>
        <dbReference type="ChEBI" id="CHEBI:57783"/>
        <dbReference type="ChEBI" id="CHEBI:58349"/>
        <dbReference type="EC" id="1.1.1.86"/>
    </reaction>
</comment>
<comment type="cofactor">
    <cofactor evidence="1">
        <name>Mg(2+)</name>
        <dbReference type="ChEBI" id="CHEBI:18420"/>
    </cofactor>
    <text evidence="1">Binds 2 magnesium ions per subunit.</text>
</comment>
<comment type="pathway">
    <text evidence="1">Amino-acid biosynthesis; L-isoleucine biosynthesis; L-isoleucine from 2-oxobutanoate: step 2/4.</text>
</comment>
<comment type="pathway">
    <text evidence="1">Amino-acid biosynthesis; L-valine biosynthesis; L-valine from pyruvate: step 2/4.</text>
</comment>
<comment type="similarity">
    <text evidence="1">Belongs to the ketol-acid reductoisomerase family.</text>
</comment>
<organism>
    <name type="scientific">Klebsiella pneumoniae (strain 342)</name>
    <dbReference type="NCBI Taxonomy" id="507522"/>
    <lineage>
        <taxon>Bacteria</taxon>
        <taxon>Pseudomonadati</taxon>
        <taxon>Pseudomonadota</taxon>
        <taxon>Gammaproteobacteria</taxon>
        <taxon>Enterobacterales</taxon>
        <taxon>Enterobacteriaceae</taxon>
        <taxon>Klebsiella/Raoultella group</taxon>
        <taxon>Klebsiella</taxon>
        <taxon>Klebsiella pneumoniae complex</taxon>
    </lineage>
</organism>
<gene>
    <name evidence="1" type="primary">ilvC</name>
    <name type="ordered locus">KPK_5407</name>
</gene>
<reference key="1">
    <citation type="journal article" date="2008" name="PLoS Genet.">
        <title>Complete genome sequence of the N2-fixing broad host range endophyte Klebsiella pneumoniae 342 and virulence predictions verified in mice.</title>
        <authorList>
            <person name="Fouts D.E."/>
            <person name="Tyler H.L."/>
            <person name="DeBoy R.T."/>
            <person name="Daugherty S."/>
            <person name="Ren Q."/>
            <person name="Badger J.H."/>
            <person name="Durkin A.S."/>
            <person name="Huot H."/>
            <person name="Shrivastava S."/>
            <person name="Kothari S."/>
            <person name="Dodson R.J."/>
            <person name="Mohamoud Y."/>
            <person name="Khouri H."/>
            <person name="Roesch L.F.W."/>
            <person name="Krogfelt K.A."/>
            <person name="Struve C."/>
            <person name="Triplett E.W."/>
            <person name="Methe B.A."/>
        </authorList>
    </citation>
    <scope>NUCLEOTIDE SEQUENCE [LARGE SCALE GENOMIC DNA]</scope>
    <source>
        <strain>342</strain>
    </source>
</reference>
<name>ILVC_KLEP3</name>
<proteinExistence type="inferred from homology"/>
<keyword id="KW-0028">Amino-acid biosynthesis</keyword>
<keyword id="KW-0100">Branched-chain amino acid biosynthesis</keyword>
<keyword id="KW-0460">Magnesium</keyword>
<keyword id="KW-0479">Metal-binding</keyword>
<keyword id="KW-0521">NADP</keyword>
<keyword id="KW-0560">Oxidoreductase</keyword>
<keyword id="KW-0677">Repeat</keyword>
<protein>
    <recommendedName>
        <fullName evidence="1">Ketol-acid reductoisomerase (NADP(+))</fullName>
        <shortName evidence="1">KARI</shortName>
        <ecNumber evidence="1">1.1.1.86</ecNumber>
    </recommendedName>
    <alternativeName>
        <fullName evidence="1">Acetohydroxy-acid isomeroreductase</fullName>
        <shortName evidence="1">AHIR</shortName>
    </alternativeName>
    <alternativeName>
        <fullName evidence="1">Alpha-keto-beta-hydroxylacyl reductoisomerase</fullName>
    </alternativeName>
    <alternativeName>
        <fullName evidence="1">Ketol-acid reductoisomerase type 2</fullName>
    </alternativeName>
    <alternativeName>
        <fullName evidence="1">Ketol-acid reductoisomerase type II</fullName>
    </alternativeName>
</protein>